<protein>
    <recommendedName>
        <fullName>Elicitor peptide 3</fullName>
    </recommendedName>
</protein>
<comment type="function">
    <text evidence="1">Elicitor of plant defense.</text>
</comment>
<comment type="similarity">
    <text evidence="3">Belongs to the brassicaceae elicitor peptide family.</text>
</comment>
<evidence type="ECO:0000250" key="1"/>
<evidence type="ECO:0000256" key="2">
    <source>
        <dbReference type="SAM" id="MobiDB-lite"/>
    </source>
</evidence>
<evidence type="ECO:0000305" key="3"/>
<organism>
    <name type="scientific">Arabidopsis thaliana</name>
    <name type="common">Mouse-ear cress</name>
    <dbReference type="NCBI Taxonomy" id="3702"/>
    <lineage>
        <taxon>Eukaryota</taxon>
        <taxon>Viridiplantae</taxon>
        <taxon>Streptophyta</taxon>
        <taxon>Embryophyta</taxon>
        <taxon>Tracheophyta</taxon>
        <taxon>Spermatophyta</taxon>
        <taxon>Magnoliopsida</taxon>
        <taxon>eudicotyledons</taxon>
        <taxon>Gunneridae</taxon>
        <taxon>Pentapetalae</taxon>
        <taxon>rosids</taxon>
        <taxon>malvids</taxon>
        <taxon>Brassicales</taxon>
        <taxon>Brassicaceae</taxon>
        <taxon>Camelineae</taxon>
        <taxon>Arabidopsis</taxon>
    </lineage>
</organism>
<sequence>MENLRNGEDNGSLIPFTFFDQSSVTIPLLKCSGLESSSSSSSSCDLSSSHSEEDESIDIKEEEEEEEEDGMTIEIKARGKNKTKPTPSSGKGGKHN</sequence>
<name>PEP3_ARATH</name>
<proteinExistence type="inferred from homology"/>
<reference key="1">
    <citation type="journal article" date="2000" name="DNA Res.">
        <title>Structural analysis of Arabidopsis thaliana chromosome 5. X. Sequence features of the regions of 3,076,755 bp covered by sixty P1 and TAC clones.</title>
        <authorList>
            <person name="Sato S."/>
            <person name="Nakamura Y."/>
            <person name="Kaneko T."/>
            <person name="Katoh T."/>
            <person name="Asamizu E."/>
            <person name="Kotani H."/>
            <person name="Tabata S."/>
        </authorList>
    </citation>
    <scope>NUCLEOTIDE SEQUENCE [LARGE SCALE GENOMIC DNA]</scope>
    <source>
        <strain>cv. Columbia</strain>
    </source>
</reference>
<reference key="2">
    <citation type="journal article" date="2017" name="Plant J.">
        <title>Araport11: a complete reannotation of the Arabidopsis thaliana reference genome.</title>
        <authorList>
            <person name="Cheng C.Y."/>
            <person name="Krishnakumar V."/>
            <person name="Chan A.P."/>
            <person name="Thibaud-Nissen F."/>
            <person name="Schobel S."/>
            <person name="Town C.D."/>
        </authorList>
    </citation>
    <scope>GENOME REANNOTATION</scope>
    <source>
        <strain>cv. Columbia</strain>
    </source>
</reference>
<reference key="3">
    <citation type="submission" date="2002-03" db="EMBL/GenBank/DDBJ databases">
        <title>Full-length cDNA from Arabidopsis thaliana.</title>
        <authorList>
            <person name="Brover V.V."/>
            <person name="Troukhan M.E."/>
            <person name="Alexandrov N.A."/>
            <person name="Lu Y.-P."/>
            <person name="Flavell R.B."/>
            <person name="Feldmann K.A."/>
        </authorList>
    </citation>
    <scope>NUCLEOTIDE SEQUENCE [LARGE SCALE MRNA]</scope>
</reference>
<reference key="4">
    <citation type="journal article" date="2006" name="Proc. Natl. Acad. Sci. U.S.A.">
        <title>An endogenous peptide signal in Arabidopsis activates components of the innate immune response.</title>
        <authorList>
            <person name="Huffaker A."/>
            <person name="Pearce G."/>
            <person name="Ryan C.A."/>
        </authorList>
    </citation>
    <scope>GENE FAMILY</scope>
    <scope>NOMENCLATURE</scope>
</reference>
<keyword id="KW-0611">Plant defense</keyword>
<keyword id="KW-1185">Reference proteome</keyword>
<dbReference type="EMBL" id="AB019236">
    <property type="status" value="NOT_ANNOTATED_CDS"/>
    <property type="molecule type" value="Genomic_DNA"/>
</dbReference>
<dbReference type="EMBL" id="CP002688">
    <property type="protein sequence ID" value="AED97967.1"/>
    <property type="molecule type" value="Genomic_DNA"/>
</dbReference>
<dbReference type="EMBL" id="AY087551">
    <property type="protein sequence ID" value="AAM65093.1"/>
    <property type="molecule type" value="mRNA"/>
</dbReference>
<dbReference type="RefSeq" id="NP_569002.1">
    <property type="nucleotide sequence ID" value="NM_125889.2"/>
</dbReference>
<dbReference type="STRING" id="3702.Q8LAX3"/>
<dbReference type="GlyGen" id="Q8LAX3">
    <property type="glycosylation" value="1 site"/>
</dbReference>
<dbReference type="PaxDb" id="3702-AT5G64905.1"/>
<dbReference type="EnsemblPlants" id="AT5G64905.1">
    <property type="protein sequence ID" value="AT5G64905.1"/>
    <property type="gene ID" value="AT5G64905"/>
</dbReference>
<dbReference type="GeneID" id="836614"/>
<dbReference type="Gramene" id="AT5G64905.1">
    <property type="protein sequence ID" value="AT5G64905.1"/>
    <property type="gene ID" value="AT5G64905"/>
</dbReference>
<dbReference type="KEGG" id="ath:AT5G64905"/>
<dbReference type="Araport" id="AT5G64905"/>
<dbReference type="TAIR" id="AT5G64905">
    <property type="gene designation" value="PROPEP3"/>
</dbReference>
<dbReference type="HOGENOM" id="CLU_2443897_0_0_1"/>
<dbReference type="InParanoid" id="Q8LAX3"/>
<dbReference type="OMA" id="DSHWIQF"/>
<dbReference type="PRO" id="PR:Q8LAX3"/>
<dbReference type="Proteomes" id="UP000006548">
    <property type="component" value="Chromosome 5"/>
</dbReference>
<dbReference type="ExpressionAtlas" id="Q8LAX3">
    <property type="expression patterns" value="baseline and differential"/>
</dbReference>
<dbReference type="GO" id="GO:0071456">
    <property type="term" value="P:cellular response to hypoxia"/>
    <property type="evidence" value="ECO:0000270"/>
    <property type="project" value="TAIR"/>
</dbReference>
<dbReference type="GO" id="GO:0006952">
    <property type="term" value="P:defense response"/>
    <property type="evidence" value="ECO:0000270"/>
    <property type="project" value="TAIR"/>
</dbReference>
<dbReference type="GO" id="GO:0045087">
    <property type="term" value="P:innate immune response"/>
    <property type="evidence" value="ECO:0007669"/>
    <property type="project" value="InterPro"/>
</dbReference>
<dbReference type="InterPro" id="IPR035176">
    <property type="entry name" value="PEP"/>
</dbReference>
<dbReference type="Pfam" id="PF17232">
    <property type="entry name" value="Pep1_7"/>
    <property type="match status" value="1"/>
</dbReference>
<accession>Q8LAX3</accession>
<gene>
    <name type="primary">PEP3</name>
    <name type="synonym">PROPEP3</name>
    <name type="ordered locus">At5g64905</name>
    <name type="ORF">MXK3</name>
</gene>
<feature type="propeptide" id="PRO_0000249083" evidence="1">
    <location>
        <begin position="1"/>
        <end position="73"/>
    </location>
</feature>
<feature type="peptide" id="PRO_0000249084" description="Elicitor peptide 3">
    <location>
        <begin position="74"/>
        <end position="96"/>
    </location>
</feature>
<feature type="region of interest" description="Disordered" evidence="2">
    <location>
        <begin position="32"/>
        <end position="96"/>
    </location>
</feature>
<feature type="compositionally biased region" description="Low complexity" evidence="2">
    <location>
        <begin position="35"/>
        <end position="49"/>
    </location>
</feature>
<feature type="compositionally biased region" description="Acidic residues" evidence="2">
    <location>
        <begin position="52"/>
        <end position="71"/>
    </location>
</feature>
<feature type="site" description="Required for ligand-receptor interaction" evidence="1">
    <location>
        <position position="90"/>
    </location>
</feature>
<feature type="sequence conflict" description="In Ref. 3; AAM65093." evidence="3" ref="3">
    <original>EDG</original>
    <variation>DD</variation>
    <location>
        <begin position="68"/>
        <end position="70"/>
    </location>
</feature>
<feature type="sequence conflict" description="In Ref. 3; AAM65093." evidence="3" ref="3">
    <original>G</original>
    <variation>E</variation>
    <location>
        <position position="79"/>
    </location>
</feature>